<feature type="chain" id="PRO_0000430988" description="Putative uncharacterized membrane protein YDR199W">
    <location>
        <begin position="1"/>
        <end position="121"/>
    </location>
</feature>
<feature type="transmembrane region" description="Helical; Name=1" evidence="1">
    <location>
        <begin position="26"/>
        <end position="46"/>
    </location>
</feature>
<feature type="transmembrane region" description="Helical; Name=2" evidence="1">
    <location>
        <begin position="57"/>
        <end position="77"/>
    </location>
</feature>
<feature type="transmembrane region" description="Helical; Name=3" evidence="1">
    <location>
        <begin position="90"/>
        <end position="110"/>
    </location>
</feature>
<evidence type="ECO:0000255" key="1"/>
<evidence type="ECO:0000305" key="2"/>
<evidence type="ECO:0000305" key="3">
    <source>
    </source>
</evidence>
<evidence type="ECO:0000312" key="4">
    <source>
        <dbReference type="SGD" id="S000002607"/>
    </source>
</evidence>
<proteinExistence type="uncertain"/>
<sequence>MEYVLIYNIWFFSFLQDKPCFCFVDYACSIFLLSSYCGNCLTAVATKPNEMATTPKSIPLLTLVLLPSTTPSSSVLINVSSVSFFSSLESFCFTLALLSLLIPPLKLLCVKTKFFPLSSSI</sequence>
<protein>
    <recommendedName>
        <fullName>Putative uncharacterized membrane protein YDR199W</fullName>
    </recommendedName>
</protein>
<gene>
    <name evidence="4" type="ordered locus">YDR199W</name>
</gene>
<keyword id="KW-0472">Membrane</keyword>
<keyword id="KW-0812">Transmembrane</keyword>
<keyword id="KW-1133">Transmembrane helix</keyword>
<dbReference type="EMBL" id="KJ412221">
    <property type="protein sequence ID" value="AHX39264.1"/>
    <property type="molecule type" value="Genomic_DNA"/>
</dbReference>
<dbReference type="PIR" id="S69754">
    <property type="entry name" value="S69754"/>
</dbReference>
<dbReference type="STRING" id="4932.YDR199W"/>
<dbReference type="PaxDb" id="4932-YDR199W"/>
<dbReference type="EnsemblFungi" id="YDR199W_mRNA">
    <property type="protein sequence ID" value="YDR199W"/>
    <property type="gene ID" value="YDR199W"/>
</dbReference>
<dbReference type="AGR" id="SGD:S000002607"/>
<dbReference type="SGD" id="S000002607">
    <property type="gene designation" value="YDR199W"/>
</dbReference>
<dbReference type="HOGENOM" id="CLU_2039890_0_0_1"/>
<dbReference type="GO" id="GO:0016020">
    <property type="term" value="C:membrane"/>
    <property type="evidence" value="ECO:0007669"/>
    <property type="project" value="UniProtKB-SubCell"/>
</dbReference>
<name>YD99W_YEAST</name>
<comment type="subcellular location">
    <subcellularLocation>
        <location evidence="1">Membrane</location>
        <topology evidence="1">Multi-pass membrane protein</topology>
    </subcellularLocation>
</comment>
<comment type="miscellaneous">
    <text evidence="2">Partially overlaps VPS64.</text>
</comment>
<comment type="caution">
    <text evidence="3">Product of a dubious gene prediction unlikely to encode a functional protein. Because of that it is not part of the S.cerevisiae S288c complete/reference proteome set.</text>
</comment>
<organism>
    <name type="scientific">Saccharomyces cerevisiae (strain ATCC 204508 / S288c)</name>
    <name type="common">Baker's yeast</name>
    <dbReference type="NCBI Taxonomy" id="559292"/>
    <lineage>
        <taxon>Eukaryota</taxon>
        <taxon>Fungi</taxon>
        <taxon>Dikarya</taxon>
        <taxon>Ascomycota</taxon>
        <taxon>Saccharomycotina</taxon>
        <taxon>Saccharomycetes</taxon>
        <taxon>Saccharomycetales</taxon>
        <taxon>Saccharomycetaceae</taxon>
        <taxon>Saccharomyces</taxon>
    </lineage>
</organism>
<accession>A0A023PXB9</accession>
<reference key="1">
    <citation type="journal article" date="1997" name="Nature">
        <title>The nucleotide sequence of Saccharomyces cerevisiae chromosome IV.</title>
        <authorList>
            <person name="Jacq C."/>
            <person name="Alt-Moerbe J."/>
            <person name="Andre B."/>
            <person name="Arnold W."/>
            <person name="Bahr A."/>
            <person name="Ballesta J.P.G."/>
            <person name="Bargues M."/>
            <person name="Baron L."/>
            <person name="Becker A."/>
            <person name="Biteau N."/>
            <person name="Bloecker H."/>
            <person name="Blugeon C."/>
            <person name="Boskovic J."/>
            <person name="Brandt P."/>
            <person name="Brueckner M."/>
            <person name="Buitrago M.J."/>
            <person name="Coster F."/>
            <person name="Delaveau T."/>
            <person name="del Rey F."/>
            <person name="Dujon B."/>
            <person name="Eide L.G."/>
            <person name="Garcia-Cantalejo J.M."/>
            <person name="Goffeau A."/>
            <person name="Gomez-Peris A."/>
            <person name="Granotier C."/>
            <person name="Hanemann V."/>
            <person name="Hankeln T."/>
            <person name="Hoheisel J.D."/>
            <person name="Jaeger W."/>
            <person name="Jimenez A."/>
            <person name="Jonniaux J.-L."/>
            <person name="Kraemer C."/>
            <person name="Kuester H."/>
            <person name="Laamanen P."/>
            <person name="Legros Y."/>
            <person name="Louis E.J."/>
            <person name="Moeller-Rieker S."/>
            <person name="Monnet A."/>
            <person name="Moro M."/>
            <person name="Mueller-Auer S."/>
            <person name="Nussbaumer B."/>
            <person name="Paricio N."/>
            <person name="Paulin L."/>
            <person name="Perea J."/>
            <person name="Perez-Alonso M."/>
            <person name="Perez-Ortin J.E."/>
            <person name="Pohl T.M."/>
            <person name="Prydz H."/>
            <person name="Purnelle B."/>
            <person name="Rasmussen S.W."/>
            <person name="Remacha M.A."/>
            <person name="Revuelta J.L."/>
            <person name="Rieger M."/>
            <person name="Salom D."/>
            <person name="Saluz H.P."/>
            <person name="Saiz J.E."/>
            <person name="Saren A.-M."/>
            <person name="Schaefer M."/>
            <person name="Scharfe M."/>
            <person name="Schmidt E.R."/>
            <person name="Schneider C."/>
            <person name="Scholler P."/>
            <person name="Schwarz S."/>
            <person name="Soler-Mira A."/>
            <person name="Urrestarazu L.A."/>
            <person name="Verhasselt P."/>
            <person name="Vissers S."/>
            <person name="Voet M."/>
            <person name="Volckaert G."/>
            <person name="Wagner G."/>
            <person name="Wambutt R."/>
            <person name="Wedler E."/>
            <person name="Wedler H."/>
            <person name="Woelfl S."/>
            <person name="Harris D.E."/>
            <person name="Bowman S."/>
            <person name="Brown D."/>
            <person name="Churcher C.M."/>
            <person name="Connor R."/>
            <person name="Dedman K."/>
            <person name="Gentles S."/>
            <person name="Hamlin N."/>
            <person name="Hunt S."/>
            <person name="Jones L."/>
            <person name="McDonald S."/>
            <person name="Murphy L.D."/>
            <person name="Niblett D."/>
            <person name="Odell C."/>
            <person name="Oliver K."/>
            <person name="Rajandream M.A."/>
            <person name="Richards C."/>
            <person name="Shore L."/>
            <person name="Walsh S.V."/>
            <person name="Barrell B.G."/>
            <person name="Dietrich F.S."/>
            <person name="Mulligan J.T."/>
            <person name="Allen E."/>
            <person name="Araujo R."/>
            <person name="Aviles E."/>
            <person name="Berno A."/>
            <person name="Carpenter J."/>
            <person name="Chen E."/>
            <person name="Cherry J.M."/>
            <person name="Chung E."/>
            <person name="Duncan M."/>
            <person name="Hunicke-Smith S."/>
            <person name="Hyman R.W."/>
            <person name="Komp C."/>
            <person name="Lashkari D."/>
            <person name="Lew H."/>
            <person name="Lin D."/>
            <person name="Mosedale D."/>
            <person name="Nakahara K."/>
            <person name="Namath A."/>
            <person name="Oefner P."/>
            <person name="Oh C."/>
            <person name="Petel F.X."/>
            <person name="Roberts D."/>
            <person name="Schramm S."/>
            <person name="Schroeder M."/>
            <person name="Shogren T."/>
            <person name="Shroff N."/>
            <person name="Winant A."/>
            <person name="Yelton M.A."/>
            <person name="Botstein D."/>
            <person name="Davis R.W."/>
            <person name="Johnston M."/>
            <person name="Andrews S."/>
            <person name="Brinkman R."/>
            <person name="Cooper J."/>
            <person name="Ding H."/>
            <person name="Du Z."/>
            <person name="Favello A."/>
            <person name="Fulton L."/>
            <person name="Gattung S."/>
            <person name="Greco T."/>
            <person name="Hallsworth K."/>
            <person name="Hawkins J."/>
            <person name="Hillier L.W."/>
            <person name="Jier M."/>
            <person name="Johnson D."/>
            <person name="Johnston L."/>
            <person name="Kirsten J."/>
            <person name="Kucaba T."/>
            <person name="Langston Y."/>
            <person name="Latreille P."/>
            <person name="Le T."/>
            <person name="Mardis E."/>
            <person name="Menezes S."/>
            <person name="Miller N."/>
            <person name="Nhan M."/>
            <person name="Pauley A."/>
            <person name="Peluso D."/>
            <person name="Rifkin L."/>
            <person name="Riles L."/>
            <person name="Taich A."/>
            <person name="Trevaskis E."/>
            <person name="Vignati D."/>
            <person name="Wilcox L."/>
            <person name="Wohldman P."/>
            <person name="Vaudin M."/>
            <person name="Wilson R."/>
            <person name="Waterston R."/>
            <person name="Albermann K."/>
            <person name="Hani J."/>
            <person name="Heumann K."/>
            <person name="Kleine K."/>
            <person name="Mewes H.-W."/>
            <person name="Zollner A."/>
            <person name="Zaccaria P."/>
        </authorList>
    </citation>
    <scope>NUCLEOTIDE SEQUENCE [LARGE SCALE GENOMIC DNA]</scope>
    <source>
        <strain>ATCC 204508 / S288c</strain>
    </source>
</reference>
<reference key="2">
    <citation type="journal article" date="2014" name="G3 (Bethesda)">
        <title>The reference genome sequence of Saccharomyces cerevisiae: Then and now.</title>
        <authorList>
            <person name="Engel S.R."/>
            <person name="Dietrich F.S."/>
            <person name="Fisk D.G."/>
            <person name="Binkley G."/>
            <person name="Balakrishnan R."/>
            <person name="Costanzo M.C."/>
            <person name="Dwight S.S."/>
            <person name="Hitz B.C."/>
            <person name="Karra K."/>
            <person name="Nash R.S."/>
            <person name="Weng S."/>
            <person name="Wong E.D."/>
            <person name="Lloyd P."/>
            <person name="Skrzypek M.S."/>
            <person name="Miyasato S.R."/>
            <person name="Simison M."/>
            <person name="Cherry J.M."/>
        </authorList>
    </citation>
    <scope>GENOME REANNOTATION</scope>
    <source>
        <strain>ATCC 204508 / S288c</strain>
    </source>
</reference>